<gene>
    <name type="primary">KIDINS220</name>
    <name type="synonym">ARMS</name>
    <name type="synonym">KIAA1250</name>
</gene>
<proteinExistence type="evidence at protein level"/>
<keyword id="KW-0025">Alternative splicing</keyword>
<keyword id="KW-0040">ANK repeat</keyword>
<keyword id="KW-0225">Disease variant</keyword>
<keyword id="KW-0967">Endosome</keyword>
<keyword id="KW-0890">Hereditary spastic paraplegia</keyword>
<keyword id="KW-0991">Intellectual disability</keyword>
<keyword id="KW-0472">Membrane</keyword>
<keyword id="KW-0523">Neurodegeneration</keyword>
<keyword id="KW-0524">Neurogenesis</keyword>
<keyword id="KW-0550">Obesity</keyword>
<keyword id="KW-0597">Phosphoprotein</keyword>
<keyword id="KW-1267">Proteomics identification</keyword>
<keyword id="KW-1185">Reference proteome</keyword>
<keyword id="KW-0677">Repeat</keyword>
<keyword id="KW-0812">Transmembrane</keyword>
<keyword id="KW-1133">Transmembrane helix</keyword>
<name>KDIS_HUMAN</name>
<dbReference type="EMBL" id="AB033076">
    <property type="protein sequence ID" value="BAA86564.2"/>
    <property type="status" value="ALT_INIT"/>
    <property type="molecule type" value="mRNA"/>
</dbReference>
<dbReference type="EMBL" id="AK022873">
    <property type="protein sequence ID" value="BAB14285.1"/>
    <property type="molecule type" value="mRNA"/>
</dbReference>
<dbReference type="EMBL" id="AK023926">
    <property type="protein sequence ID" value="BAB14728.1"/>
    <property type="status" value="ALT_INIT"/>
    <property type="molecule type" value="mRNA"/>
</dbReference>
<dbReference type="EMBL" id="AL133620">
    <property type="protein sequence ID" value="CAB63746.1"/>
    <property type="molecule type" value="mRNA"/>
</dbReference>
<dbReference type="EMBL" id="AL137553">
    <property type="protein sequence ID" value="CAB70807.1"/>
    <property type="molecule type" value="mRNA"/>
</dbReference>
<dbReference type="EMBL" id="BX640878">
    <property type="protein sequence ID" value="CAE45935.1"/>
    <property type="molecule type" value="mRNA"/>
</dbReference>
<dbReference type="EMBL" id="BC094714">
    <property type="protein sequence ID" value="AAH94714.1"/>
    <property type="molecule type" value="mRNA"/>
</dbReference>
<dbReference type="EMBL" id="BC130610">
    <property type="protein sequence ID" value="AAI30611.1"/>
    <property type="molecule type" value="mRNA"/>
</dbReference>
<dbReference type="CCDS" id="CCDS42650.1">
    <molecule id="Q9ULH0-1"/>
</dbReference>
<dbReference type="CCDS" id="CCDS86818.1">
    <molecule id="Q9ULH0-4"/>
</dbReference>
<dbReference type="CCDS" id="CCDS86819.1">
    <molecule id="Q9ULH0-3"/>
</dbReference>
<dbReference type="CCDS" id="CCDS92711.1">
    <molecule id="Q9ULH0-2"/>
</dbReference>
<dbReference type="PIR" id="T43458">
    <property type="entry name" value="T43458"/>
</dbReference>
<dbReference type="RefSeq" id="NP_001335661.1">
    <molecule id="Q9ULH0-4"/>
    <property type="nucleotide sequence ID" value="NM_001348732.2"/>
</dbReference>
<dbReference type="RefSeq" id="NP_001335665.1">
    <molecule id="Q9ULH0-2"/>
    <property type="nucleotide sequence ID" value="NM_001348736.2"/>
</dbReference>
<dbReference type="RefSeq" id="NP_001335674.1">
    <molecule id="Q9ULH0-3"/>
    <property type="nucleotide sequence ID" value="NM_001348745.2"/>
</dbReference>
<dbReference type="RefSeq" id="NP_065789.1">
    <molecule id="Q9ULH0-1"/>
    <property type="nucleotide sequence ID" value="NM_020738.4"/>
</dbReference>
<dbReference type="SMR" id="Q9ULH0"/>
<dbReference type="BioGRID" id="121565">
    <property type="interactions" value="210"/>
</dbReference>
<dbReference type="FunCoup" id="Q9ULH0">
    <property type="interactions" value="2489"/>
</dbReference>
<dbReference type="IntAct" id="Q9ULH0">
    <property type="interactions" value="127"/>
</dbReference>
<dbReference type="MINT" id="Q9ULH0"/>
<dbReference type="STRING" id="9606.ENSP00000256707"/>
<dbReference type="TCDB" id="8.A.28.1.8">
    <property type="family name" value="the ankyrin (ankyrin) family"/>
</dbReference>
<dbReference type="GlyGen" id="Q9ULH0">
    <property type="glycosylation" value="2 sites, 1 N-linked glycan (1 site), 1 O-linked glycan (1 site)"/>
</dbReference>
<dbReference type="iPTMnet" id="Q9ULH0"/>
<dbReference type="MetOSite" id="Q9ULH0"/>
<dbReference type="PhosphoSitePlus" id="Q9ULH0"/>
<dbReference type="SwissPalm" id="Q9ULH0"/>
<dbReference type="BioMuta" id="KIDINS220"/>
<dbReference type="DMDM" id="172044825"/>
<dbReference type="jPOST" id="Q9ULH0"/>
<dbReference type="MassIVE" id="Q9ULH0"/>
<dbReference type="PaxDb" id="9606-ENSP00000256707"/>
<dbReference type="PeptideAtlas" id="Q9ULH0"/>
<dbReference type="ProteomicsDB" id="85020">
    <molecule id="Q9ULH0-1"/>
</dbReference>
<dbReference type="ProteomicsDB" id="85021">
    <molecule id="Q9ULH0-2"/>
</dbReference>
<dbReference type="ProteomicsDB" id="85022">
    <molecule id="Q9ULH0-3"/>
</dbReference>
<dbReference type="ProteomicsDB" id="85023">
    <molecule id="Q9ULH0-4"/>
</dbReference>
<dbReference type="ProteomicsDB" id="85024">
    <molecule id="Q9ULH0-5"/>
</dbReference>
<dbReference type="Pumba" id="Q9ULH0"/>
<dbReference type="Antibodypedia" id="6605">
    <property type="antibodies" value="269 antibodies from 32 providers"/>
</dbReference>
<dbReference type="DNASU" id="57498"/>
<dbReference type="Ensembl" id="ENST00000256707.8">
    <molecule id="Q9ULH0-1"/>
    <property type="protein sequence ID" value="ENSP00000256707.4"/>
    <property type="gene ID" value="ENSG00000134313.17"/>
</dbReference>
<dbReference type="Ensembl" id="ENST00000319688.5">
    <molecule id="Q9ULH0-3"/>
    <property type="protein sequence ID" value="ENSP00000319947.5"/>
    <property type="gene ID" value="ENSG00000134313.17"/>
</dbReference>
<dbReference type="Ensembl" id="ENST00000473731.5">
    <molecule id="Q9ULH0-4"/>
    <property type="protein sequence ID" value="ENSP00000418974.1"/>
    <property type="gene ID" value="ENSG00000134313.17"/>
</dbReference>
<dbReference type="Ensembl" id="ENST00000685097.1">
    <molecule id="Q9ULH0-2"/>
    <property type="protein sequence ID" value="ENSP00000510510.1"/>
    <property type="gene ID" value="ENSG00000134313.17"/>
</dbReference>
<dbReference type="GeneID" id="57498"/>
<dbReference type="KEGG" id="hsa:57498"/>
<dbReference type="MANE-Select" id="ENST00000256707.8">
    <property type="protein sequence ID" value="ENSP00000256707.4"/>
    <property type="RefSeq nucleotide sequence ID" value="NM_020738.4"/>
    <property type="RefSeq protein sequence ID" value="NP_065789.1"/>
</dbReference>
<dbReference type="UCSC" id="uc002qzc.2">
    <molecule id="Q9ULH0-1"/>
    <property type="organism name" value="human"/>
</dbReference>
<dbReference type="AGR" id="HGNC:29508"/>
<dbReference type="CTD" id="57498"/>
<dbReference type="DisGeNET" id="57498"/>
<dbReference type="GeneCards" id="KIDINS220"/>
<dbReference type="HGNC" id="HGNC:29508">
    <property type="gene designation" value="KIDINS220"/>
</dbReference>
<dbReference type="HPA" id="ENSG00000134313">
    <property type="expression patterns" value="Low tissue specificity"/>
</dbReference>
<dbReference type="MalaCards" id="KIDINS220"/>
<dbReference type="MIM" id="615759">
    <property type="type" value="gene"/>
</dbReference>
<dbReference type="MIM" id="617296">
    <property type="type" value="phenotype"/>
</dbReference>
<dbReference type="MIM" id="619501">
    <property type="type" value="phenotype"/>
</dbReference>
<dbReference type="neXtProt" id="NX_Q9ULH0"/>
<dbReference type="OpenTargets" id="ENSG00000134313"/>
<dbReference type="Orphanet" id="521390">
    <property type="disease" value="Spastic paraplegia-intellectual disability-nystagmus-obesity syndrome"/>
</dbReference>
<dbReference type="PharmGKB" id="PA164721911"/>
<dbReference type="VEuPathDB" id="HostDB:ENSG00000134313"/>
<dbReference type="eggNOG" id="KOG0502">
    <property type="taxonomic scope" value="Eukaryota"/>
</dbReference>
<dbReference type="GeneTree" id="ENSGT00940000156714"/>
<dbReference type="HOGENOM" id="CLU_001438_0_0_1"/>
<dbReference type="InParanoid" id="Q9ULH0"/>
<dbReference type="OMA" id="INHNMHS"/>
<dbReference type="OrthoDB" id="6084525at2759"/>
<dbReference type="PAN-GO" id="Q9ULH0">
    <property type="GO annotations" value="3 GO annotations based on evolutionary models"/>
</dbReference>
<dbReference type="PhylomeDB" id="Q9ULH0"/>
<dbReference type="TreeFam" id="TF344032"/>
<dbReference type="PathwayCommons" id="Q9ULH0"/>
<dbReference type="Reactome" id="R-HSA-170984">
    <property type="pathway name" value="ARMS-mediated activation"/>
</dbReference>
<dbReference type="Reactome" id="R-HSA-9696270">
    <property type="pathway name" value="RND2 GTPase cycle"/>
</dbReference>
<dbReference type="Reactome" id="R-HSA-9696273">
    <property type="pathway name" value="RND1 GTPase cycle"/>
</dbReference>
<dbReference type="SignaLink" id="Q9ULH0"/>
<dbReference type="SIGNOR" id="Q9ULH0"/>
<dbReference type="BioGRID-ORCS" id="57498">
    <property type="hits" value="49 hits in 1165 CRISPR screens"/>
</dbReference>
<dbReference type="ChiTaRS" id="KIDINS220">
    <property type="organism name" value="human"/>
</dbReference>
<dbReference type="GeneWiki" id="KIDINS220"/>
<dbReference type="GenomeRNAi" id="57498"/>
<dbReference type="Pharos" id="Q9ULH0">
    <property type="development level" value="Tbio"/>
</dbReference>
<dbReference type="PRO" id="PR:Q9ULH0"/>
<dbReference type="Proteomes" id="UP000005640">
    <property type="component" value="Chromosome 2"/>
</dbReference>
<dbReference type="RNAct" id="Q9ULH0">
    <property type="molecule type" value="protein"/>
</dbReference>
<dbReference type="Bgee" id="ENSG00000134313">
    <property type="expression patterns" value="Expressed in middle frontal gyrus and 206 other cell types or tissues"/>
</dbReference>
<dbReference type="ExpressionAtlas" id="Q9ULH0">
    <property type="expression patterns" value="baseline and differential"/>
</dbReference>
<dbReference type="GO" id="GO:0005829">
    <property type="term" value="C:cytosol"/>
    <property type="evidence" value="ECO:0000304"/>
    <property type="project" value="Reactome"/>
</dbReference>
<dbReference type="GO" id="GO:0005770">
    <property type="term" value="C:late endosome"/>
    <property type="evidence" value="ECO:0000250"/>
    <property type="project" value="UniProtKB"/>
</dbReference>
<dbReference type="GO" id="GO:0016020">
    <property type="term" value="C:membrane"/>
    <property type="evidence" value="ECO:0007005"/>
    <property type="project" value="UniProtKB"/>
</dbReference>
<dbReference type="GO" id="GO:0032991">
    <property type="term" value="C:protein-containing complex"/>
    <property type="evidence" value="ECO:0000250"/>
    <property type="project" value="UniProtKB"/>
</dbReference>
<dbReference type="GO" id="GO:0030165">
    <property type="term" value="F:PDZ domain binding"/>
    <property type="evidence" value="ECO:0000250"/>
    <property type="project" value="UniProtKB"/>
</dbReference>
<dbReference type="GO" id="GO:0019887">
    <property type="term" value="F:protein kinase regulator activity"/>
    <property type="evidence" value="ECO:0000318"/>
    <property type="project" value="GO_Central"/>
</dbReference>
<dbReference type="GO" id="GO:1990090">
    <property type="term" value="P:cellular response to nerve growth factor stimulus"/>
    <property type="evidence" value="ECO:0000250"/>
    <property type="project" value="UniProtKB"/>
</dbReference>
<dbReference type="GO" id="GO:0048813">
    <property type="term" value="P:dendrite morphogenesis"/>
    <property type="evidence" value="ECO:0007669"/>
    <property type="project" value="Ensembl"/>
</dbReference>
<dbReference type="GO" id="GO:0001701">
    <property type="term" value="P:in utero embryonic development"/>
    <property type="evidence" value="ECO:0007669"/>
    <property type="project" value="Ensembl"/>
</dbReference>
<dbReference type="GO" id="GO:0038180">
    <property type="term" value="P:nerve growth factor signaling pathway"/>
    <property type="evidence" value="ECO:0000250"/>
    <property type="project" value="UniProtKB"/>
</dbReference>
<dbReference type="GO" id="GO:0010976">
    <property type="term" value="P:positive regulation of neuron projection development"/>
    <property type="evidence" value="ECO:0000250"/>
    <property type="project" value="UniProtKB"/>
</dbReference>
<dbReference type="FunFam" id="1.25.40.20:FF:000030">
    <property type="entry name" value="Kinase D-interacting substrate of 220 kDa"/>
    <property type="match status" value="1"/>
</dbReference>
<dbReference type="FunFam" id="1.25.40.20:FF:000195">
    <property type="entry name" value="Kinase D-interacting substrate of 220 kDa"/>
    <property type="match status" value="1"/>
</dbReference>
<dbReference type="FunFam" id="1.10.150.50:FF:000044">
    <property type="entry name" value="kinase D-interacting substrate of 220 kDa isoform X1"/>
    <property type="match status" value="1"/>
</dbReference>
<dbReference type="Gene3D" id="1.25.40.20">
    <property type="entry name" value="Ankyrin repeat-containing domain"/>
    <property type="match status" value="3"/>
</dbReference>
<dbReference type="Gene3D" id="1.10.150.50">
    <property type="entry name" value="Transcription Factor, Ets-1"/>
    <property type="match status" value="1"/>
</dbReference>
<dbReference type="InterPro" id="IPR002110">
    <property type="entry name" value="Ankyrin_rpt"/>
</dbReference>
<dbReference type="InterPro" id="IPR036770">
    <property type="entry name" value="Ankyrin_rpt-contain_sf"/>
</dbReference>
<dbReference type="InterPro" id="IPR011646">
    <property type="entry name" value="KAP_P-loop"/>
</dbReference>
<dbReference type="InterPro" id="IPR052771">
    <property type="entry name" value="Neurotrophin_sig_adaptor"/>
</dbReference>
<dbReference type="InterPro" id="IPR013761">
    <property type="entry name" value="SAM/pointed_sf"/>
</dbReference>
<dbReference type="PANTHER" id="PTHR24116">
    <property type="entry name" value="KINASE D-INTERACTING SUBSTRATE OF 220 KDA"/>
    <property type="match status" value="1"/>
</dbReference>
<dbReference type="PANTHER" id="PTHR24116:SF0">
    <property type="entry name" value="KINASE D-INTERACTING SUBSTRATE OF 220 KDA"/>
    <property type="match status" value="1"/>
</dbReference>
<dbReference type="Pfam" id="PF00023">
    <property type="entry name" value="Ank"/>
    <property type="match status" value="2"/>
</dbReference>
<dbReference type="Pfam" id="PF12796">
    <property type="entry name" value="Ank_2"/>
    <property type="match status" value="3"/>
</dbReference>
<dbReference type="Pfam" id="PF13637">
    <property type="entry name" value="Ank_4"/>
    <property type="match status" value="1"/>
</dbReference>
<dbReference type="Pfam" id="PF07693">
    <property type="entry name" value="KAP_NTPase"/>
    <property type="match status" value="1"/>
</dbReference>
<dbReference type="Pfam" id="PF23307">
    <property type="entry name" value="SAM_KIDINS220"/>
    <property type="match status" value="1"/>
</dbReference>
<dbReference type="PRINTS" id="PR01415">
    <property type="entry name" value="ANKYRIN"/>
</dbReference>
<dbReference type="SMART" id="SM00248">
    <property type="entry name" value="ANK"/>
    <property type="match status" value="11"/>
</dbReference>
<dbReference type="SUPFAM" id="SSF48403">
    <property type="entry name" value="Ankyrin repeat"/>
    <property type="match status" value="1"/>
</dbReference>
<dbReference type="SUPFAM" id="SSF47769">
    <property type="entry name" value="SAM/Pointed domain"/>
    <property type="match status" value="1"/>
</dbReference>
<dbReference type="PROSITE" id="PS50297">
    <property type="entry name" value="ANK_REP_REGION"/>
    <property type="match status" value="1"/>
</dbReference>
<dbReference type="PROSITE" id="PS50088">
    <property type="entry name" value="ANK_REPEAT"/>
    <property type="match status" value="10"/>
</dbReference>
<accession>Q9ULH0</accession>
<accession>A1L4N4</accession>
<accession>Q4VC08</accession>
<accession>Q6MZU2</accession>
<accession>Q9H889</accession>
<accession>Q9H9E4</accession>
<accession>Q9NT37</accession>
<accession>Q9UF42</accession>
<reference key="1">
    <citation type="journal article" date="1999" name="DNA Res.">
        <title>Prediction of the coding sequences of unidentified human genes. XV. The complete sequences of 100 new cDNA clones from brain which code for large proteins in vitro.</title>
        <authorList>
            <person name="Nagase T."/>
            <person name="Ishikawa K."/>
            <person name="Kikuno R."/>
            <person name="Hirosawa M."/>
            <person name="Nomura N."/>
            <person name="Ohara O."/>
        </authorList>
    </citation>
    <scope>NUCLEOTIDE SEQUENCE [LARGE SCALE MRNA] (ISOFORM 1)</scope>
    <source>
        <tissue>Brain</tissue>
    </source>
</reference>
<reference key="2">
    <citation type="journal article" date="2002" name="DNA Res.">
        <title>Construction of expression-ready cDNA clones for KIAA genes: manual curation of 330 KIAA cDNA clones.</title>
        <authorList>
            <person name="Nakajima D."/>
            <person name="Okazaki N."/>
            <person name="Yamakawa H."/>
            <person name="Kikuno R."/>
            <person name="Ohara O."/>
            <person name="Nagase T."/>
        </authorList>
    </citation>
    <scope>SEQUENCE REVISION</scope>
</reference>
<reference key="3">
    <citation type="journal article" date="2004" name="Nat. Genet.">
        <title>Complete sequencing and characterization of 21,243 full-length human cDNAs.</title>
        <authorList>
            <person name="Ota T."/>
            <person name="Suzuki Y."/>
            <person name="Nishikawa T."/>
            <person name="Otsuki T."/>
            <person name="Sugiyama T."/>
            <person name="Irie R."/>
            <person name="Wakamatsu A."/>
            <person name="Hayashi K."/>
            <person name="Sato H."/>
            <person name="Nagai K."/>
            <person name="Kimura K."/>
            <person name="Makita H."/>
            <person name="Sekine M."/>
            <person name="Obayashi M."/>
            <person name="Nishi T."/>
            <person name="Shibahara T."/>
            <person name="Tanaka T."/>
            <person name="Ishii S."/>
            <person name="Yamamoto J."/>
            <person name="Saito K."/>
            <person name="Kawai Y."/>
            <person name="Isono Y."/>
            <person name="Nakamura Y."/>
            <person name="Nagahari K."/>
            <person name="Murakami K."/>
            <person name="Yasuda T."/>
            <person name="Iwayanagi T."/>
            <person name="Wagatsuma M."/>
            <person name="Shiratori A."/>
            <person name="Sudo H."/>
            <person name="Hosoiri T."/>
            <person name="Kaku Y."/>
            <person name="Kodaira H."/>
            <person name="Kondo H."/>
            <person name="Sugawara M."/>
            <person name="Takahashi M."/>
            <person name="Kanda K."/>
            <person name="Yokoi T."/>
            <person name="Furuya T."/>
            <person name="Kikkawa E."/>
            <person name="Omura Y."/>
            <person name="Abe K."/>
            <person name="Kamihara K."/>
            <person name="Katsuta N."/>
            <person name="Sato K."/>
            <person name="Tanikawa M."/>
            <person name="Yamazaki M."/>
            <person name="Ninomiya K."/>
            <person name="Ishibashi T."/>
            <person name="Yamashita H."/>
            <person name="Murakawa K."/>
            <person name="Fujimori K."/>
            <person name="Tanai H."/>
            <person name="Kimata M."/>
            <person name="Watanabe M."/>
            <person name="Hiraoka S."/>
            <person name="Chiba Y."/>
            <person name="Ishida S."/>
            <person name="Ono Y."/>
            <person name="Takiguchi S."/>
            <person name="Watanabe S."/>
            <person name="Yosida M."/>
            <person name="Hotuta T."/>
            <person name="Kusano J."/>
            <person name="Kanehori K."/>
            <person name="Takahashi-Fujii A."/>
            <person name="Hara H."/>
            <person name="Tanase T.-O."/>
            <person name="Nomura Y."/>
            <person name="Togiya S."/>
            <person name="Komai F."/>
            <person name="Hara R."/>
            <person name="Takeuchi K."/>
            <person name="Arita M."/>
            <person name="Imose N."/>
            <person name="Musashino K."/>
            <person name="Yuuki H."/>
            <person name="Oshima A."/>
            <person name="Sasaki N."/>
            <person name="Aotsuka S."/>
            <person name="Yoshikawa Y."/>
            <person name="Matsunawa H."/>
            <person name="Ichihara T."/>
            <person name="Shiohata N."/>
            <person name="Sano S."/>
            <person name="Moriya S."/>
            <person name="Momiyama H."/>
            <person name="Satoh N."/>
            <person name="Takami S."/>
            <person name="Terashima Y."/>
            <person name="Suzuki O."/>
            <person name="Nakagawa S."/>
            <person name="Senoh A."/>
            <person name="Mizoguchi H."/>
            <person name="Goto Y."/>
            <person name="Shimizu F."/>
            <person name="Wakebe H."/>
            <person name="Hishigaki H."/>
            <person name="Watanabe T."/>
            <person name="Sugiyama A."/>
            <person name="Takemoto M."/>
            <person name="Kawakami B."/>
            <person name="Yamazaki M."/>
            <person name="Watanabe K."/>
            <person name="Kumagai A."/>
            <person name="Itakura S."/>
            <person name="Fukuzumi Y."/>
            <person name="Fujimori Y."/>
            <person name="Komiyama M."/>
            <person name="Tashiro H."/>
            <person name="Tanigami A."/>
            <person name="Fujiwara T."/>
            <person name="Ono T."/>
            <person name="Yamada K."/>
            <person name="Fujii Y."/>
            <person name="Ozaki K."/>
            <person name="Hirao M."/>
            <person name="Ohmori Y."/>
            <person name="Kawabata A."/>
            <person name="Hikiji T."/>
            <person name="Kobatake N."/>
            <person name="Inagaki H."/>
            <person name="Ikema Y."/>
            <person name="Okamoto S."/>
            <person name="Okitani R."/>
            <person name="Kawakami T."/>
            <person name="Noguchi S."/>
            <person name="Itoh T."/>
            <person name="Shigeta K."/>
            <person name="Senba T."/>
            <person name="Matsumura K."/>
            <person name="Nakajima Y."/>
            <person name="Mizuno T."/>
            <person name="Morinaga M."/>
            <person name="Sasaki M."/>
            <person name="Togashi T."/>
            <person name="Oyama M."/>
            <person name="Hata H."/>
            <person name="Watanabe M."/>
            <person name="Komatsu T."/>
            <person name="Mizushima-Sugano J."/>
            <person name="Satoh T."/>
            <person name="Shirai Y."/>
            <person name="Takahashi Y."/>
            <person name="Nakagawa K."/>
            <person name="Okumura K."/>
            <person name="Nagase T."/>
            <person name="Nomura N."/>
            <person name="Kikuchi H."/>
            <person name="Masuho Y."/>
            <person name="Yamashita R."/>
            <person name="Nakai K."/>
            <person name="Yada T."/>
            <person name="Nakamura Y."/>
            <person name="Ohara O."/>
            <person name="Isogai T."/>
            <person name="Sugano S."/>
        </authorList>
    </citation>
    <scope>NUCLEOTIDE SEQUENCE [LARGE SCALE MRNA] (ISOFORM 5)</scope>
    <scope>NUCLEOTIDE SEQUENCE [LARGE SCALE MRNA] OF 1636-1771 (ISOFORM 1)</scope>
    <scope>VARIANT HIS-1608</scope>
    <source>
        <tissue>Thyroid</tissue>
    </source>
</reference>
<reference key="4">
    <citation type="journal article" date="2007" name="BMC Genomics">
        <title>The full-ORF clone resource of the German cDNA consortium.</title>
        <authorList>
            <person name="Bechtel S."/>
            <person name="Rosenfelder H."/>
            <person name="Duda A."/>
            <person name="Schmidt C.P."/>
            <person name="Ernst U."/>
            <person name="Wellenreuther R."/>
            <person name="Mehrle A."/>
            <person name="Schuster C."/>
            <person name="Bahr A."/>
            <person name="Bloecker H."/>
            <person name="Heubner D."/>
            <person name="Hoerlein A."/>
            <person name="Michel G."/>
            <person name="Wedler H."/>
            <person name="Koehrer K."/>
            <person name="Ottenwaelder B."/>
            <person name="Poustka A."/>
            <person name="Wiemann S."/>
            <person name="Schupp I."/>
        </authorList>
    </citation>
    <scope>NUCLEOTIDE SEQUENCE [LARGE SCALE MRNA] (ISOFORM 3)</scope>
    <scope>NUCLEOTIDE SEQUENCE [LARGE SCALE MRNA] OF 1089-1771 (ISOFORM 4)</scope>
    <scope>NUCLEOTIDE SEQUENCE [LARGE SCALE MRNA] OF 1526-1771 (ISOFORM 1)</scope>
    <scope>VARIANT HIS-1608</scope>
    <source>
        <tissue>Esophageal carcinoma</tissue>
        <tissue>Testis</tissue>
    </source>
</reference>
<reference key="5">
    <citation type="journal article" date="2004" name="Genome Res.">
        <title>The status, quality, and expansion of the NIH full-length cDNA project: the Mammalian Gene Collection (MGC).</title>
        <authorList>
            <consortium name="The MGC Project Team"/>
        </authorList>
    </citation>
    <scope>NUCLEOTIDE SEQUENCE [LARGE SCALE MRNA] (ISOFORM 2)</scope>
    <scope>NUCLEOTIDE SEQUENCE [LARGE SCALE MRNA] OF 1478-1771</scope>
    <scope>VARIANT HIS-1608</scope>
</reference>
<reference key="6">
    <citation type="journal article" date="2007" name="Cancer Res.">
        <title>ARMS depletion facilitates UV irradiation induced apoptotic cell death in melanoma.</title>
        <authorList>
            <person name="Liao Y.-H."/>
            <person name="Hsu S.-M."/>
            <person name="Huang P.-H."/>
        </authorList>
    </citation>
    <scope>FUNCTION</scope>
    <scope>TISSUE SPECIFICITY</scope>
</reference>
<reference key="7">
    <citation type="journal article" date="2008" name="J. Proteome Res.">
        <title>Combining protein-based IMAC, peptide-based IMAC, and MudPIT for efficient phosphoproteomic analysis.</title>
        <authorList>
            <person name="Cantin G.T."/>
            <person name="Yi W."/>
            <person name="Lu B."/>
            <person name="Park S.K."/>
            <person name="Xu T."/>
            <person name="Lee J.-D."/>
            <person name="Yates J.R. III"/>
        </authorList>
    </citation>
    <scope>IDENTIFICATION BY MASS SPECTROMETRY [LARGE SCALE ANALYSIS]</scope>
    <source>
        <tissue>Cervix carcinoma</tissue>
    </source>
</reference>
<reference key="8">
    <citation type="journal article" date="2008" name="Proc. Natl. Acad. Sci. U.S.A.">
        <title>A quantitative atlas of mitotic phosphorylation.</title>
        <authorList>
            <person name="Dephoure N."/>
            <person name="Zhou C."/>
            <person name="Villen J."/>
            <person name="Beausoleil S.A."/>
            <person name="Bakalarski C.E."/>
            <person name="Elledge S.J."/>
            <person name="Gygi S.P."/>
        </authorList>
    </citation>
    <scope>PHOSPHORYLATION [LARGE SCALE ANALYSIS] AT SER-918; SER-1365 AND SER-1521</scope>
    <scope>IDENTIFICATION BY MASS SPECTROMETRY [LARGE SCALE ANALYSIS]</scope>
    <source>
        <tissue>Cervix carcinoma</tissue>
    </source>
</reference>
<reference key="9">
    <citation type="journal article" date="2009" name="Anal. Chem.">
        <title>Lys-N and trypsin cover complementary parts of the phosphoproteome in a refined SCX-based approach.</title>
        <authorList>
            <person name="Gauci S."/>
            <person name="Helbig A.O."/>
            <person name="Slijper M."/>
            <person name="Krijgsveld J."/>
            <person name="Heck A.J."/>
            <person name="Mohammed S."/>
        </authorList>
    </citation>
    <scope>IDENTIFICATION BY MASS SPECTROMETRY [LARGE SCALE ANALYSIS]</scope>
</reference>
<reference key="10">
    <citation type="journal article" date="2009" name="Sci. Signal.">
        <title>Quantitative phosphoproteomic analysis of T cell receptor signaling reveals system-wide modulation of protein-protein interactions.</title>
        <authorList>
            <person name="Mayya V."/>
            <person name="Lundgren D.H."/>
            <person name="Hwang S.-I."/>
            <person name="Rezaul K."/>
            <person name="Wu L."/>
            <person name="Eng J.K."/>
            <person name="Rodionov V."/>
            <person name="Han D.K."/>
        </authorList>
    </citation>
    <scope>IDENTIFICATION BY MASS SPECTROMETRY [LARGE SCALE ANALYSIS]</scope>
    <source>
        <tissue>Leukemic T-cell</tissue>
    </source>
</reference>
<reference key="11">
    <citation type="journal article" date="2010" name="Sci. Signal.">
        <title>Quantitative phosphoproteomics reveals widespread full phosphorylation site occupancy during mitosis.</title>
        <authorList>
            <person name="Olsen J.V."/>
            <person name="Vermeulen M."/>
            <person name="Santamaria A."/>
            <person name="Kumar C."/>
            <person name="Miller M.L."/>
            <person name="Jensen L.J."/>
            <person name="Gnad F."/>
            <person name="Cox J."/>
            <person name="Jensen T.S."/>
            <person name="Nigg E.A."/>
            <person name="Brunak S."/>
            <person name="Mann M."/>
        </authorList>
    </citation>
    <scope>PHOSPHORYLATION [LARGE SCALE ANALYSIS] AT SER-1555</scope>
    <scope>IDENTIFICATION BY MASS SPECTROMETRY [LARGE SCALE ANALYSIS]</scope>
    <source>
        <tissue>Cervix carcinoma</tissue>
    </source>
</reference>
<reference key="12">
    <citation type="journal article" date="2011" name="BMC Syst. Biol.">
        <title>Initial characterization of the human central proteome.</title>
        <authorList>
            <person name="Burkard T.R."/>
            <person name="Planyavsky M."/>
            <person name="Kaupe I."/>
            <person name="Breitwieser F.P."/>
            <person name="Buerckstuemmer T."/>
            <person name="Bennett K.L."/>
            <person name="Superti-Furga G."/>
            <person name="Colinge J."/>
        </authorList>
    </citation>
    <scope>IDENTIFICATION BY MASS SPECTROMETRY [LARGE SCALE ANALYSIS]</scope>
</reference>
<reference key="13">
    <citation type="journal article" date="2011" name="Sci. Signal.">
        <title>System-wide temporal characterization of the proteome and phosphoproteome of human embryonic stem cell differentiation.</title>
        <authorList>
            <person name="Rigbolt K.T."/>
            <person name="Prokhorova T.A."/>
            <person name="Akimov V."/>
            <person name="Henningsen J."/>
            <person name="Johansen P.T."/>
            <person name="Kratchmarova I."/>
            <person name="Kassem M."/>
            <person name="Mann M."/>
            <person name="Olsen J.V."/>
            <person name="Blagoev B."/>
        </authorList>
    </citation>
    <scope>PHOSPHORYLATION [LARGE SCALE ANALYSIS] AT SER-1555 AND SER-1633</scope>
    <scope>IDENTIFICATION BY MASS SPECTROMETRY [LARGE SCALE ANALYSIS]</scope>
</reference>
<reference key="14">
    <citation type="journal article" date="2013" name="J. Proteome Res.">
        <title>Toward a comprehensive characterization of a human cancer cell phosphoproteome.</title>
        <authorList>
            <person name="Zhou H."/>
            <person name="Di Palma S."/>
            <person name="Preisinger C."/>
            <person name="Peng M."/>
            <person name="Polat A.N."/>
            <person name="Heck A.J."/>
            <person name="Mohammed S."/>
        </authorList>
    </citation>
    <scope>PHOSPHORYLATION [LARGE SCALE ANALYSIS] AT SER-882; SER-885; THR-914; SER-918; SER-1163; SER-1296; SER-1352; SER-1359; SER-1361; SER-1362; SER-1365; SER-1521; SER-1526; SER-1555; SER-1574; SER-1623; SER-1633; THR-1679; SER-1681 AND THR-1684</scope>
    <scope>IDENTIFICATION BY MASS SPECTROMETRY [LARGE SCALE ANALYSIS]</scope>
    <source>
        <tissue>Cervix carcinoma</tissue>
        <tissue>Erythroleukemia</tissue>
    </source>
</reference>
<reference key="15">
    <citation type="journal article" date="2014" name="J. Proteomics">
        <title>An enzyme assisted RP-RPLC approach for in-depth analysis of human liver phosphoproteome.</title>
        <authorList>
            <person name="Bian Y."/>
            <person name="Song C."/>
            <person name="Cheng K."/>
            <person name="Dong M."/>
            <person name="Wang F."/>
            <person name="Huang J."/>
            <person name="Sun D."/>
            <person name="Wang L."/>
            <person name="Ye M."/>
            <person name="Zou H."/>
        </authorList>
    </citation>
    <scope>PHOSPHORYLATION [LARGE SCALE ANALYSIS] AT SER-918</scope>
    <scope>IDENTIFICATION BY MASS SPECTROMETRY [LARGE SCALE ANALYSIS]</scope>
    <source>
        <tissue>Liver</tissue>
    </source>
</reference>
<reference key="16">
    <citation type="journal article" date="2016" name="Hum. Mol. Genet.">
        <title>Heterozygous KIDINS220/ARMS nonsense variants cause spastic paraplegia, intellectual disability, nystagmus, and obesity.</title>
        <authorList>
            <consortium name="DDD Study"/>
            <person name="Josifova D.J."/>
            <person name="Monroe G.R."/>
            <person name="Tessadori F."/>
            <person name="de Graaff E."/>
            <person name="van der Zwaag B."/>
            <person name="Mehta S.G."/>
            <person name="Harakalova M."/>
            <person name="Duran K.J."/>
            <person name="Savelberg S.M."/>
            <person name="Nijman I.J."/>
            <person name="Jungbluth H."/>
            <person name="Hoogenraad C.C."/>
            <person name="Bakkers J."/>
            <person name="Knoers N.V."/>
            <person name="Firth H.V."/>
            <person name="Beales P.L."/>
            <person name="van Haaften G."/>
            <person name="van Haelst M.M."/>
        </authorList>
    </citation>
    <scope>INVOLVEMENT IN SINO</scope>
    <scope>VARIANTS SINO 1350-TRP--LEU-1771 DEL AND 1366-GLN--LEU-1771 DEL</scope>
    <scope>CHARACTERIZATION OF VARIANT SINO 1350-TRP--LEU-1771 DEL AND 1366-GLN--LEU-1771 DEL</scope>
</reference>
<reference key="17">
    <citation type="journal article" date="2017" name="Hum. Mol. Genet.">
        <title>Homozygous KIDINS220 loss-of-function variants in fetuses with cerebral ventriculomegaly and limb contractures.</title>
        <authorList>
            <person name="Mero I.L."/>
            <person name="Moerk H.H."/>
            <person name="Sheng Y."/>
            <person name="Blomhoff A."/>
            <person name="Opheim G.L."/>
            <person name="Erichsen A."/>
            <person name="Vigeland M.D."/>
            <person name="Selmer K.K."/>
        </authorList>
    </citation>
    <scope>INVOLVEMENT IN VENARG</scope>
</reference>
<reference key="18">
    <citation type="journal article" date="2020" name="Am. J. Med. Genet. A">
        <title>Prenatal delineation of a distinct lethal fetal syndrome caused by a homozygous truncating KIDINS220 variant.</title>
        <authorList>
            <person name="El-Dessouky S.H."/>
            <person name="Issa M.Y."/>
            <person name="Aboulghar M.M."/>
            <person name="Gaafar H.M."/>
            <person name="Elarab A.E."/>
            <person name="Ateya M.I."/>
            <person name="Omar H.H."/>
            <person name="Beetz C."/>
            <person name="Zaki M.S."/>
        </authorList>
    </citation>
    <scope>INVOLVEMENT IN VENARG</scope>
</reference>
<reference key="19">
    <citation type="journal article" date="2021" name="Hum. Mol. Genet.">
        <title>TrkA mediates effect of novel KIDINS220 mutation in human brain ventriculomegaly.</title>
        <authorList>
            <person name="Jacquemin V."/>
            <person name="Antoine M."/>
            <person name="Duerinckx S."/>
            <person name="Massart A."/>
            <person name="Desir J."/>
            <person name="Perazzolo C."/>
            <person name="Cassart M."/>
            <person name="Thomas D."/>
            <person name="Segers V."/>
            <person name="Lecomte S."/>
            <person name="Abramowicz M."/>
            <person name="Pirson I."/>
        </authorList>
    </citation>
    <scope>VARIANT VENARG 713-GLN--LEU-715 DEL</scope>
</reference>
<protein>
    <recommendedName>
        <fullName>Kinase D-interacting substrate of 220 kDa</fullName>
    </recommendedName>
    <alternativeName>
        <fullName>Ankyrin repeat-rich membrane-spanning protein</fullName>
    </alternativeName>
</protein>
<organism>
    <name type="scientific">Homo sapiens</name>
    <name type="common">Human</name>
    <dbReference type="NCBI Taxonomy" id="9606"/>
    <lineage>
        <taxon>Eukaryota</taxon>
        <taxon>Metazoa</taxon>
        <taxon>Chordata</taxon>
        <taxon>Craniata</taxon>
        <taxon>Vertebrata</taxon>
        <taxon>Euteleostomi</taxon>
        <taxon>Mammalia</taxon>
        <taxon>Eutheria</taxon>
        <taxon>Euarchontoglires</taxon>
        <taxon>Primates</taxon>
        <taxon>Haplorrhini</taxon>
        <taxon>Catarrhini</taxon>
        <taxon>Hominidae</taxon>
        <taxon>Homo</taxon>
    </lineage>
</organism>
<evidence type="ECO:0000250" key="1"/>
<evidence type="ECO:0000250" key="2">
    <source>
        <dbReference type="UniProtKB" id="Q9EQG6"/>
    </source>
</evidence>
<evidence type="ECO:0000255" key="3"/>
<evidence type="ECO:0000256" key="4">
    <source>
        <dbReference type="SAM" id="MobiDB-lite"/>
    </source>
</evidence>
<evidence type="ECO:0000269" key="5">
    <source>
    </source>
</evidence>
<evidence type="ECO:0000269" key="6">
    <source>
    </source>
</evidence>
<evidence type="ECO:0000269" key="7">
    <source>
    </source>
</evidence>
<evidence type="ECO:0000269" key="8">
    <source>
    </source>
</evidence>
<evidence type="ECO:0000269" key="9">
    <source>
    </source>
</evidence>
<evidence type="ECO:0000269" key="10">
    <source>
    </source>
</evidence>
<evidence type="ECO:0000269" key="11">
    <source>
    </source>
</evidence>
<evidence type="ECO:0000269" key="12">
    <source>
    </source>
</evidence>
<evidence type="ECO:0000303" key="13">
    <source>
    </source>
</evidence>
<evidence type="ECO:0000303" key="14">
    <source>
    </source>
</evidence>
<evidence type="ECO:0000303" key="15">
    <source>
    </source>
</evidence>
<evidence type="ECO:0000305" key="16"/>
<evidence type="ECO:0007744" key="17">
    <source>
    </source>
</evidence>
<evidence type="ECO:0007744" key="18">
    <source>
    </source>
</evidence>
<evidence type="ECO:0007744" key="19">
    <source>
    </source>
</evidence>
<evidence type="ECO:0007744" key="20">
    <source>
    </source>
</evidence>
<evidence type="ECO:0007744" key="21">
    <source>
    </source>
</evidence>
<sequence>MSVLISQSVINYVEEENIPALKALLEKCKDVDERNECGQTPLMIAAEQGNLEIVKELIKNGANCNLEDLDNWTALISASKEGHVHIVEELLKCGVNLEHRDMGGWTALMWACYKGRTDVVELLLSHGANPSVTGLYSVYPIIWAAGRGHADIVHLLLQNGAKVNCSDKYGTTPLVWAARKGHLECVKHLLAMGADVDQEGANSMTALIVAVKGGYTQSVKEILKRNPNVNLTDKDGNTALMIASKEGHTEIVQDLLDAGTYVNIPDRSGDTVLIGAVRGGHVEIVRALLQKYADIDIRGQDNKTALYWAVEKGNATMVRDILQCNPDTEICTKDGETPLIKATKMRNIEVVELLLDKGAKVSAVDKKGDTPLHIAIRGRSRKLAELLLRNPKDGRLLYRPNKAGETPYNIDCSHQKSILTQIFGARHLSPTETDGDMLGYDLYSSALADILSEPTMQPPICVGLYAQWGSGKSFLLKKLEDEMKTFAGQQIEPLFQFSWLIVFLTLLLCGGLGLLFAFTVHPNLGIAVSLSFLALLYIFFIVIYFGGRREGESWNWAWVLSTRLARHIGYLELLLKLMFVNPPELPEQTTKALPVRFLFTDYNRLSSVGGETSLAEMIATLSDACEREFGFLATRLFRVFKTEDTQGKKKWKKTCCLPSFVIFLFIIGCIISGITLLAIFRVDPKHLTVNAVLISIASVVGLAFVLNCRTWWQVLDSLLNSQRKRLHNAASKLHKLKSEGFMKVLKCEVELMARMAKTIDSFTQNQTRLVVIIDGLDACEQDKVLQMLDTVRVLFSKGPFIAIFASDPHIIIKAINQNLNSVLRDSNINGHDYMRNIVHLPVFLNSRGLSNARKFLVTSATNGDVPCSDTTGIQEDADRRVSQNSLGEMTKLGSKTALNRRDTYRRRQMQRTITRQMSFDLTKLLVTEDWFSDISPQTMRRLLNIVSVTGRLLRANQISFNWDRLASWINLTEQWPYRTSWLILYLEETEGIPDQMTLKTIYERISKNIPTTKDVEPLLEIDGDIRNFEVFLSSRTPVLVARDVKVFLPCTVNLDPKLREIIADVRAAREQISIGGLAYPPLPLHEGPPRAPSGYSQPPSVCSSTSFNGPFAGGVVSPQPHSSYYSGMTGPQHPFYNRPFFAPYLYTPRYYPGGSQHLISRPSVKTSLPRDQNNGLEVIKEDAAEGLSSPTDSSRGSGPAPGPVVLLNSLNVDAVCEKLKQIEGLDQSMLPQYCTTIKKANINGRVLAQCNIDELKKEMNMNFGDWHLFRSTVLEMRNAESHVVPEDPRFLSESSSGPAPHGEPARRASHNELPHTELSSQTPYTLNFSFEELNTLGLDEGAPRHSNLSWQSQTRRTPSLSSLNSQDSSIEISKLTDKVQAEYRDAYREYIAQMSQLEGGPGSTTISGRSSPHSTYYMGQSSSGGSIHSNLEQEKGKDSEPKPDDGRKSFLMKRGDVIDYSSSGVSTNDASPLDPITEEDEKSDQSGSKLLPGKKSSERSSLFQTDLKLKGSGLRYQKLPSDEDESGTEESDNTPLLKDDKDRKAEGKVERVPKSPEHSAEPIRTFIKAKEYLSDALLDKKDSSDSGVRSSESSPNHSLHNEVADDSQLEKANLIELEDDSHSGKRGIPHSLSGLQDPIIARMSICSEDKKSPSECSLIASSPEENWPACQKAYNLNRTPSTVTLNNNSAPANRANQNFDEMEGIRETSQVILRPSSSPNPTTIQNENLKSMTHKRSQRSSYTRLSKDPPELHAAASSESTGFGEERESIL</sequence>
<comment type="function">
    <text evidence="1 8">Promotes a prolonged MAP-kinase signaling by neurotrophins through activation of a Rap1-dependent mechanism. Provides a docking site for the CRKL-C3G complex, resulting in Rap1-dependent sustained ERK activation. May play an important role in regulating postsynaptic signal transduction through the syntrophin-mediated localization of receptor tyrosine kinases such as EPHA4. In cooperation with SNTA1 can enhance EPHA4-induced JAK/STAT activation. Plays a role in nerve growth factor (NGF)-induced recruitment of RAPGEF2 to late endosomes and neurite outgrowth. May play a role in neurotrophin- and ephrin-mediated neuronal outgrowth and in axon guidance during neural development and in neuronal regeneration (By similarity). Modulates stress-induced apoptosis of melanoma cells via regulation of the MEK/ERK signaling pathway.</text>
</comment>
<comment type="subunit">
    <text evidence="2">Found in a complex, at least composed of KIDINS220, MAGI2, NTRK1 and RAPGEF2; the complex is mainly formed at late endosomes in a nerve growth factor (NGF)-dependent manner. Interacts with RAPGEF2; the interaction is strengthened after NGF stimulation. Isoform 2 interacts (via C-terminal domain) with MAGI2 isoform 1 (via PDZ domain). Interacts with NTRK1, NTRK2, NTRK3, ERKL and NGFR. Can form a ternary complex with NGFR and NTRK1 and this complex is affected by the expression levels of KIDINS220/ARMS. An increase in KIDINS220/ARMS expression leads to a decreased association of NGFR and NTRK1. Interacts (via PDZ-binding motif) with SNTA1 and SNTB2 (via PDZ domains). Interacts with EPHA4 and PRKD1.</text>
</comment>
<comment type="interaction">
    <interactant intactId="EBI-11046235">
        <id>Q9ULH0-2</id>
    </interactant>
    <interactant intactId="EBI-741101">
        <id>Q13643</id>
        <label>FHL3</label>
    </interactant>
    <organismsDiffer>false</organismsDiffer>
    <experiments>3</experiments>
</comment>
<comment type="interaction">
    <interactant intactId="EBI-11046235">
        <id>Q9ULH0-2</id>
    </interactant>
    <interactant intactId="EBI-1047093">
        <id>O76011</id>
        <label>KRT34</label>
    </interactant>
    <organismsDiffer>false</organismsDiffer>
    <experiments>3</experiments>
</comment>
<comment type="subcellular location">
    <subcellularLocation>
        <location evidence="16">Membrane</location>
        <topology evidence="16">Multi-pass membrane protein</topology>
    </subcellularLocation>
    <subcellularLocation>
        <location evidence="1">Late endosome</location>
    </subcellularLocation>
    <text>Localized at late endosome before or after nerve growth factor (NGF) stimulation.</text>
</comment>
<comment type="alternative products">
    <event type="alternative splicing"/>
    <isoform>
        <id>Q9ULH0-1</id>
        <name>1</name>
        <sequence type="displayed"/>
    </isoform>
    <isoform>
        <id>Q9ULH0-2</id>
        <name>2</name>
        <sequence type="described" ref="VSP_031862 VSP_031866"/>
    </isoform>
    <isoform>
        <id>Q9ULH0-3</id>
        <name>3</name>
        <sequence type="described" ref="VSP_031863 VSP_031864 VSP_031865"/>
    </isoform>
    <isoform>
        <id>Q9ULH0-4</id>
        <name>4</name>
        <sequence type="described" ref="VSP_031867"/>
    </isoform>
    <isoform>
        <id>Q9ULH0-5</id>
        <name>5</name>
        <sequence type="described" ref="VSP_031861"/>
    </isoform>
</comment>
<comment type="tissue specificity">
    <text evidence="8">Abundant in developing and adult neural tissues as well as neuroendocrine cells and dendritic cells. Overexpressed in melanoma and melanoma cell lines.</text>
</comment>
<comment type="domain">
    <text evidence="1">The transmembrane domain mediates interaction with NTRK1.</text>
</comment>
<comment type="PTM">
    <text evidence="1">Tyrosine phosphorylated by NTRK1, NTRK2, EPHB2 and EPHA4. Phosphorylation at Ser-918 is induced by phorbol ester treatment. Phosphorylation by NTRK2 is induced by brain-derived neurotrophic factor (BDNF) and neurotrophin-4/5. Phosphorylation by NTRK1 is induced by nerve growth factor (NGF) (By similarity).</text>
</comment>
<comment type="disease" evidence="9">
    <disease id="DI-04932">
        <name>Spastic paraplegia, intellectual disability, nystagmus, and obesity</name>
        <acronym>SINO</acronym>
        <description>An autosomal dominant syndrome characterized by rapid growth in infancy, obesity, global developmental delay, intellectual disability, spastic paraplegia, ocular defects, and dysmorphic facial features.</description>
        <dbReference type="MIM" id="617296"/>
    </disease>
    <text>The disease is caused by variants affecting the gene represented in this entry.</text>
</comment>
<comment type="disease" evidence="10 11 12">
    <disease id="DI-06216">
        <name>Ventriculomegaly and arthrogryposis</name>
        <acronym>VENARG</acronym>
        <description>An autosomal recessive disorder with fatal outcome, characterized by prenatal onset of severe features including limb contractures, arthrogryposis, and enlarged brain ventricles that may be associated with hydrocephalus, abnormalities of the corpus callosum, and cerebellar hypoplasia. Some affected fetuses may also have congenital heart disease and hydrops fetalis. Death occurs in utero.</description>
        <dbReference type="MIM" id="619501"/>
    </disease>
    <text>The disease is caused by variants affecting the gene represented in this entry.</text>
</comment>
<comment type="sequence caution" evidence="16">
    <conflict type="erroneous initiation">
        <sequence resource="EMBL-CDS" id="BAA86564"/>
    </conflict>
</comment>
<comment type="sequence caution" evidence="16">
    <conflict type="erroneous initiation">
        <sequence resource="EMBL-CDS" id="BAB14728"/>
    </conflict>
</comment>
<feature type="chain" id="PRO_0000322119" description="Kinase D-interacting substrate of 220 kDa">
    <location>
        <begin position="1"/>
        <end position="1771"/>
    </location>
</feature>
<feature type="topological domain" description="Cytoplasmic" evidence="3">
    <location>
        <begin position="1"/>
        <end position="499"/>
    </location>
</feature>
<feature type="transmembrane region" description="Helical" evidence="3">
    <location>
        <begin position="500"/>
        <end position="520"/>
    </location>
</feature>
<feature type="topological domain" description="Extracellular" evidence="3">
    <location>
        <begin position="521"/>
        <end position="524"/>
    </location>
</feature>
<feature type="transmembrane region" description="Helical" evidence="3">
    <location>
        <begin position="525"/>
        <end position="545"/>
    </location>
</feature>
<feature type="topological domain" description="Cytoplasmic" evidence="3">
    <location>
        <begin position="546"/>
        <end position="659"/>
    </location>
</feature>
<feature type="transmembrane region" description="Helical" evidence="3">
    <location>
        <begin position="660"/>
        <end position="680"/>
    </location>
</feature>
<feature type="topological domain" description="Extracellular" evidence="3">
    <location>
        <begin position="681"/>
        <end position="685"/>
    </location>
</feature>
<feature type="transmembrane region" description="Helical" evidence="3">
    <location>
        <begin position="686"/>
        <end position="706"/>
    </location>
</feature>
<feature type="topological domain" description="Cytoplasmic" evidence="3">
    <location>
        <begin position="707"/>
        <end position="1771"/>
    </location>
</feature>
<feature type="repeat" description="ANK 1">
    <location>
        <begin position="4"/>
        <end position="33"/>
    </location>
</feature>
<feature type="repeat" description="ANK 2">
    <location>
        <begin position="37"/>
        <end position="66"/>
    </location>
</feature>
<feature type="repeat" description="ANK 3">
    <location>
        <begin position="70"/>
        <end position="99"/>
    </location>
</feature>
<feature type="repeat" description="ANK 4">
    <location>
        <begin position="103"/>
        <end position="132"/>
    </location>
</feature>
<feature type="repeat" description="ANK 5">
    <location>
        <begin position="136"/>
        <end position="165"/>
    </location>
</feature>
<feature type="repeat" description="ANK 6">
    <location>
        <begin position="169"/>
        <end position="198"/>
    </location>
</feature>
<feature type="repeat" description="ANK 7">
    <location>
        <begin position="202"/>
        <end position="231"/>
    </location>
</feature>
<feature type="repeat" description="ANK 8">
    <location>
        <begin position="235"/>
        <end position="264"/>
    </location>
</feature>
<feature type="repeat" description="ANK 9">
    <location>
        <begin position="268"/>
        <end position="297"/>
    </location>
</feature>
<feature type="repeat" description="ANK 10">
    <location>
        <begin position="301"/>
        <end position="330"/>
    </location>
</feature>
<feature type="repeat" description="ANK 11">
    <location>
        <begin position="334"/>
        <end position="363"/>
    </location>
</feature>
<feature type="repeat" description="ANK 12">
    <location>
        <begin position="367"/>
        <end position="396"/>
    </location>
</feature>
<feature type="domain" description="KAP NTPase">
    <location>
        <begin position="440"/>
        <end position="953"/>
    </location>
</feature>
<feature type="region of interest" description="Mediates interaction with CRKL" evidence="2">
    <location>
        <begin position="1089"/>
        <end position="1092"/>
    </location>
</feature>
<feature type="region of interest" description="Disordered" evidence="4">
    <location>
        <begin position="1182"/>
        <end position="1202"/>
    </location>
</feature>
<feature type="region of interest" description="Disordered" evidence="4">
    <location>
        <begin position="1285"/>
        <end position="1310"/>
    </location>
</feature>
<feature type="region of interest" description="Disordered" evidence="4">
    <location>
        <begin position="1344"/>
        <end position="1368"/>
    </location>
</feature>
<feature type="region of interest" description="Disordered" evidence="4">
    <location>
        <begin position="1397"/>
        <end position="1564"/>
    </location>
</feature>
<feature type="region of interest" description="Disordered" evidence="4">
    <location>
        <begin position="1578"/>
        <end position="1633"/>
    </location>
</feature>
<feature type="region of interest" description="Disordered" evidence="4">
    <location>
        <begin position="1713"/>
        <end position="1771"/>
    </location>
</feature>
<feature type="short sequence motif" description="PDZ-binding" evidence="2">
    <location>
        <begin position="1766"/>
        <end position="1771"/>
    </location>
</feature>
<feature type="compositionally biased region" description="Polar residues" evidence="4">
    <location>
        <begin position="1346"/>
        <end position="1358"/>
    </location>
</feature>
<feature type="compositionally biased region" description="Low complexity" evidence="4">
    <location>
        <begin position="1359"/>
        <end position="1368"/>
    </location>
</feature>
<feature type="compositionally biased region" description="Polar residues" evidence="4">
    <location>
        <begin position="1403"/>
        <end position="1430"/>
    </location>
</feature>
<feature type="compositionally biased region" description="Basic and acidic residues" evidence="4">
    <location>
        <begin position="1431"/>
        <end position="1457"/>
    </location>
</feature>
<feature type="compositionally biased region" description="Polar residues" evidence="4">
    <location>
        <begin position="1460"/>
        <end position="1470"/>
    </location>
</feature>
<feature type="compositionally biased region" description="Acidic residues" evidence="4">
    <location>
        <begin position="1522"/>
        <end position="1532"/>
    </location>
</feature>
<feature type="compositionally biased region" description="Basic and acidic residues" evidence="4">
    <location>
        <begin position="1537"/>
        <end position="1561"/>
    </location>
</feature>
<feature type="compositionally biased region" description="Low complexity" evidence="4">
    <location>
        <begin position="1585"/>
        <end position="1594"/>
    </location>
</feature>
<feature type="compositionally biased region" description="Polar residues" evidence="4">
    <location>
        <begin position="1713"/>
        <end position="1731"/>
    </location>
</feature>
<feature type="modified residue" description="Phosphoserine" evidence="20">
    <location>
        <position position="882"/>
    </location>
</feature>
<feature type="modified residue" description="Phosphoserine" evidence="20">
    <location>
        <position position="885"/>
    </location>
</feature>
<feature type="modified residue" description="Phosphothreonine" evidence="20">
    <location>
        <position position="914"/>
    </location>
</feature>
<feature type="modified residue" description="Phosphoserine" evidence="17 20 21">
    <location>
        <position position="918"/>
    </location>
</feature>
<feature type="modified residue" description="Phosphoserine" evidence="20">
    <location>
        <position position="1163"/>
    </location>
</feature>
<feature type="modified residue" description="Phosphoserine" evidence="20">
    <location>
        <position position="1296"/>
    </location>
</feature>
<feature type="modified residue" description="Phosphoserine" evidence="20">
    <location>
        <position position="1352"/>
    </location>
</feature>
<feature type="modified residue" description="Phosphoserine" evidence="20">
    <location>
        <position position="1359"/>
    </location>
</feature>
<feature type="modified residue" description="Phosphoserine" evidence="20">
    <location>
        <position position="1361"/>
    </location>
</feature>
<feature type="modified residue" description="Phosphoserine" evidence="20">
    <location>
        <position position="1362"/>
    </location>
</feature>
<feature type="modified residue" description="Phosphoserine" evidence="17 20">
    <location>
        <position position="1365"/>
    </location>
</feature>
<feature type="modified residue" description="Phosphoserine" evidence="17 20">
    <location>
        <position position="1521"/>
    </location>
</feature>
<feature type="modified residue" description="Phosphoserine" evidence="20">
    <location>
        <position position="1526"/>
    </location>
</feature>
<feature type="modified residue" description="Phosphoserine" evidence="18 19 20">
    <location>
        <position position="1555"/>
    </location>
</feature>
<feature type="modified residue" description="Phosphoserine" evidence="20">
    <location>
        <position position="1574"/>
    </location>
</feature>
<feature type="modified residue" description="Phosphoserine" evidence="20">
    <location>
        <position position="1623"/>
    </location>
</feature>
<feature type="modified residue" description="Phosphoserine" evidence="19 20">
    <location>
        <position position="1633"/>
    </location>
</feature>
<feature type="modified residue" description="Phosphothreonine" evidence="20">
    <location>
        <position position="1679"/>
    </location>
</feature>
<feature type="modified residue" description="Phosphoserine" evidence="20">
    <location>
        <position position="1681"/>
    </location>
</feature>
<feature type="modified residue" description="Phosphothreonine" evidence="20">
    <location>
        <position position="1684"/>
    </location>
</feature>
<feature type="splice variant" id="VSP_031861" description="In isoform 5." evidence="13">
    <location>
        <begin position="1"/>
        <end position="1228"/>
    </location>
</feature>
<feature type="splice variant" id="VSP_031862" description="In isoform 2." evidence="14">
    <location>
        <begin position="1"/>
        <end position="42"/>
    </location>
</feature>
<feature type="splice variant" id="VSP_031863" description="In isoform 3." evidence="15">
    <original>L</original>
    <variation>LQ</variation>
    <location>
        <position position="135"/>
    </location>
</feature>
<feature type="splice variant" id="VSP_031864" description="In isoform 3." evidence="15">
    <original>ISKNIPTTKDVEPLLEIDGDIRNFEV</original>
    <variation>CCGADSCDRDRIGISKSVLVAMLMES</variation>
    <location>
        <begin position="1005"/>
        <end position="1030"/>
    </location>
</feature>
<feature type="splice variant" id="VSP_031865" description="In isoform 3." evidence="15">
    <location>
        <begin position="1031"/>
        <end position="1771"/>
    </location>
</feature>
<feature type="splice variant" id="VSP_031866" description="In isoform 2." evidence="14">
    <location>
        <begin position="1138"/>
        <end position="1194"/>
    </location>
</feature>
<feature type="splice variant" id="VSP_031867" description="In isoform 4." evidence="15">
    <location>
        <begin position="1177"/>
        <end position="1195"/>
    </location>
</feature>
<feature type="sequence variant" id="VAR_048285" description="In dbSNP:rs2289229.">
    <original>I</original>
    <variation>T</variation>
    <location>
        <position position="538"/>
    </location>
</feature>
<feature type="sequence variant" id="VAR_086218" description="In VENARG." evidence="12">
    <location>
        <begin position="713"/>
        <end position="715"/>
    </location>
</feature>
<feature type="sequence variant" id="VAR_039399" description="In dbSNP:rs2304591.">
    <original>R</original>
    <variation>H</variation>
    <location>
        <position position="1307"/>
    </location>
</feature>
<feature type="sequence variant" id="VAR_077995" description="In SINO; no effect on protein abundance." evidence="9">
    <location>
        <begin position="1350"/>
        <end position="1771"/>
    </location>
</feature>
<feature type="sequence variant" id="VAR_077996" description="In SINO; no effect on protein abundance; no effect on subcellular localization." evidence="9">
    <location>
        <begin position="1366"/>
        <end position="1771"/>
    </location>
</feature>
<feature type="sequence variant" id="VAR_039400" description="In dbSNP:rs1044280." evidence="5 6 7">
    <original>Q</original>
    <variation>H</variation>
    <location>
        <position position="1608"/>
    </location>
</feature>
<feature type="sequence conflict" description="In Ref. 4; CAE45935." evidence="16" ref="4">
    <original>T</original>
    <variation>P</variation>
    <location>
        <position position="1335"/>
    </location>
</feature>
<feature type="sequence conflict" description="In Ref. 3; BAB14285." evidence="16" ref="3">
    <original>N</original>
    <variation>D</variation>
    <location>
        <position position="1613"/>
    </location>
</feature>